<sequence>MTTSTIKPTGGDEVPPAGVVGNVADVGVAASLTKRDSEEDTWASKGYNYINPFVHRIEIDSHIEVAKIYVLTVLLLPIRVVGCVLSLISAWMFACIGLYGMTLDDLKAKPLTGWRKQMQYMTACGMRMVYTFGSFHYVTMKGRAATAKEAPILVVAPHSSYVDSILVVASGPPSIVAKRETADIPLLGKIINYAQPIYVQREDPNSRQNTIRDIVDRARSTDDWPQVVIFAEGTCTNRTALIKFKPGAFYPGVPVQPVLLKYPNKYDTFTWTWDGPGVLRLLWLTMTQFYNRCEIEYLPVYTPSEDEVADANLYANNVREVMAKALGVPTSDYSFEDVIVMSRARDMKIPFPGDIVEIERTIEKLGLNESQRDAELCKGFLRLSNTDRLDIITFGELLQVDLKNTDLHKLFALLDHRRSGTVSLKSFLLCSLFCKLKNSDLLTFLRALIHLYSESSQQIDRESFVRLMRHAGGKLNEQKAQALFYALDTDNLGYVSFDSFVELTEKQKSSYKFLYHKSEHIRRPKAVVTTAEN</sequence>
<comment type="function">
    <text evidence="1 7">Acetyltransferase which mediates the conversion of 1-acyl-sn-glycero-3-phosphocholine (LPC) into phosphatidylcholine (PC) (By similarity). Has a calcium-independent activity (By similarity). Displays a clear preference for saturated fatty acyl-CoAs, and 1-myristoyl or 1-palmitoyl LPC as acyl donors and acceptors, respectively (By similarity). Involved in the regulation of lipid droplet number and size (PubMed:25491198).</text>
</comment>
<comment type="catalytic activity">
    <reaction evidence="1">
        <text>a 1-acyl-sn-glycero-3-phosphocholine + an acyl-CoA = a 1,2-diacyl-sn-glycero-3-phosphocholine + CoA</text>
        <dbReference type="Rhea" id="RHEA:12937"/>
        <dbReference type="ChEBI" id="CHEBI:57287"/>
        <dbReference type="ChEBI" id="CHEBI:57643"/>
        <dbReference type="ChEBI" id="CHEBI:58168"/>
        <dbReference type="ChEBI" id="CHEBI:58342"/>
        <dbReference type="EC" id="2.3.1.23"/>
    </reaction>
</comment>
<comment type="pathway">
    <text evidence="2">Lipid metabolism; phospholipid metabolism.</text>
</comment>
<comment type="subcellular location">
    <subcellularLocation>
        <location evidence="2">Endoplasmic reticulum membrane</location>
        <topology evidence="2">Single-pass type II membrane protein</topology>
    </subcellularLocation>
    <subcellularLocation>
        <location evidence="2">Golgi apparatus membrane</location>
        <topology evidence="2">Single-pass type II membrane protein</topology>
    </subcellularLocation>
    <subcellularLocation>
        <location evidence="7">Lipid droplet</location>
    </subcellularLocation>
</comment>
<comment type="domain">
    <text evidence="1">The HXXXXD motif is essential for acyltransferase activity and may constitute the binding site for the phosphate moiety of the glycerol-3-phosphocholine.</text>
</comment>
<comment type="RNA editing">
    <location>
        <position position="175" evidence="6 8"/>
    </location>
    <text evidence="6">Partially edited. Target of Adar.</text>
</comment>
<comment type="disruption phenotype">
    <text evidence="7">RNAi-mediated knockdown in larvae increases lipid droplet size and reduces lipid droplet number in fat bodies.</text>
</comment>
<comment type="similarity">
    <text evidence="1">Belongs to the 1-acyl-sn-glycerol-3-phosphate acyltransferase family.</text>
</comment>
<comment type="sequence caution" evidence="9">
    <conflict type="miscellaneous discrepancy">
        <sequence resource="EMBL-CDS" id="AAL28380"/>
    </conflict>
    <text>Probable cloning artifact.</text>
</comment>
<protein>
    <recommendedName>
        <fullName evidence="13">Lysophosphatidylcholine acyltransferase</fullName>
    </recommendedName>
    <alternativeName>
        <fullName>1-acylglycerophosphocholine O-acyltransferase</fullName>
        <ecNumber evidence="1">2.3.1.23</ecNumber>
    </alternativeName>
    <alternativeName>
        <fullName>Acyltransferase-like 2</fullName>
    </alternativeName>
</protein>
<dbReference type="EC" id="2.3.1.23" evidence="1"/>
<dbReference type="EMBL" id="AE014298">
    <property type="protein sequence ID" value="ABI30972.1"/>
    <property type="molecule type" value="Genomic_DNA"/>
</dbReference>
<dbReference type="EMBL" id="BT003594">
    <property type="protein sequence ID" value="AAO39597.1"/>
    <property type="molecule type" value="mRNA"/>
</dbReference>
<dbReference type="EMBL" id="AY060832">
    <property type="protein sequence ID" value="AAL28380.1"/>
    <property type="status" value="ALT_SEQ"/>
    <property type="molecule type" value="mRNA"/>
</dbReference>
<dbReference type="RefSeq" id="NP_001036265.1">
    <property type="nucleotide sequence ID" value="NM_001042800.3"/>
</dbReference>
<dbReference type="SMR" id="Q0KHU5"/>
<dbReference type="BioGRID" id="58341">
    <property type="interactions" value="3"/>
</dbReference>
<dbReference type="FunCoup" id="Q0KHU5">
    <property type="interactions" value="1468"/>
</dbReference>
<dbReference type="IntAct" id="Q0KHU5">
    <property type="interactions" value="3"/>
</dbReference>
<dbReference type="STRING" id="7227.FBpp0110147"/>
<dbReference type="PaxDb" id="7227-FBpp0110147"/>
<dbReference type="EnsemblMetazoa" id="FBtr0110850">
    <property type="protein sequence ID" value="FBpp0110147"/>
    <property type="gene ID" value="FBgn0052699"/>
</dbReference>
<dbReference type="GeneID" id="31899"/>
<dbReference type="KEGG" id="dme:Dmel_CG32699"/>
<dbReference type="AGR" id="FB:FBgn0052699"/>
<dbReference type="CTD" id="31899"/>
<dbReference type="FlyBase" id="FBgn0052699">
    <property type="gene designation" value="LPCAT"/>
</dbReference>
<dbReference type="VEuPathDB" id="VectorBase:FBgn0052699"/>
<dbReference type="eggNOG" id="KOG4666">
    <property type="taxonomic scope" value="Eukaryota"/>
</dbReference>
<dbReference type="GeneTree" id="ENSGT01030000234574"/>
<dbReference type="HOGENOM" id="CLU_025017_0_1_1"/>
<dbReference type="InParanoid" id="Q0KHU5"/>
<dbReference type="OMA" id="FLYHKSE"/>
<dbReference type="OrthoDB" id="272512at2759"/>
<dbReference type="PhylomeDB" id="Q0KHU5"/>
<dbReference type="Reactome" id="R-DME-1482788">
    <property type="pathway name" value="Acyl chain remodelling of PC"/>
</dbReference>
<dbReference type="Reactome" id="R-DME-1482801">
    <property type="pathway name" value="Acyl chain remodelling of PS"/>
</dbReference>
<dbReference type="Reactome" id="R-DME-1482839">
    <property type="pathway name" value="Acyl chain remodelling of PE"/>
</dbReference>
<dbReference type="Reactome" id="R-DME-1482925">
    <property type="pathway name" value="Acyl chain remodelling of PG"/>
</dbReference>
<dbReference type="Reactome" id="R-DME-1483166">
    <property type="pathway name" value="Synthesis of PA"/>
</dbReference>
<dbReference type="Reactome" id="R-DME-6798695">
    <property type="pathway name" value="Neutrophil degranulation"/>
</dbReference>
<dbReference type="UniPathway" id="UPA00085"/>
<dbReference type="BioGRID-ORCS" id="31899">
    <property type="hits" value="0 hits in 3 CRISPR screens"/>
</dbReference>
<dbReference type="GenomeRNAi" id="31899"/>
<dbReference type="PRO" id="PR:Q0KHU5"/>
<dbReference type="Proteomes" id="UP000000803">
    <property type="component" value="Chromosome X"/>
</dbReference>
<dbReference type="Bgee" id="FBgn0052699">
    <property type="expression patterns" value="Expressed in indirect flight muscle cell (Drosophila) in post-embryonic organism and 222 other cell types or tissues"/>
</dbReference>
<dbReference type="GO" id="GO:0005783">
    <property type="term" value="C:endoplasmic reticulum"/>
    <property type="evidence" value="ECO:0000250"/>
    <property type="project" value="UniProtKB"/>
</dbReference>
<dbReference type="GO" id="GO:0005789">
    <property type="term" value="C:endoplasmic reticulum membrane"/>
    <property type="evidence" value="ECO:0007669"/>
    <property type="project" value="UniProtKB-SubCell"/>
</dbReference>
<dbReference type="GO" id="GO:0005794">
    <property type="term" value="C:Golgi apparatus"/>
    <property type="evidence" value="ECO:0000250"/>
    <property type="project" value="UniProtKB"/>
</dbReference>
<dbReference type="GO" id="GO:0000139">
    <property type="term" value="C:Golgi membrane"/>
    <property type="evidence" value="ECO:0007669"/>
    <property type="project" value="UniProtKB-SubCell"/>
</dbReference>
<dbReference type="GO" id="GO:0005811">
    <property type="term" value="C:lipid droplet"/>
    <property type="evidence" value="ECO:0000314"/>
    <property type="project" value="FlyBase"/>
</dbReference>
<dbReference type="GO" id="GO:0047184">
    <property type="term" value="F:1-acylglycerophosphocholine O-acyltransferase activity"/>
    <property type="evidence" value="ECO:0000250"/>
    <property type="project" value="UniProtKB"/>
</dbReference>
<dbReference type="GO" id="GO:0005509">
    <property type="term" value="F:calcium ion binding"/>
    <property type="evidence" value="ECO:0007669"/>
    <property type="project" value="InterPro"/>
</dbReference>
<dbReference type="GO" id="GO:0042171">
    <property type="term" value="F:lysophosphatidic acid acyltransferase activity"/>
    <property type="evidence" value="ECO:0000318"/>
    <property type="project" value="GO_Central"/>
</dbReference>
<dbReference type="GO" id="GO:0071617">
    <property type="term" value="F:lysophospholipid acyltransferase activity"/>
    <property type="evidence" value="ECO:0000315"/>
    <property type="project" value="FlyBase"/>
</dbReference>
<dbReference type="GO" id="GO:0030258">
    <property type="term" value="P:lipid modification"/>
    <property type="evidence" value="ECO:0000315"/>
    <property type="project" value="FlyBase"/>
</dbReference>
<dbReference type="GO" id="GO:0008654">
    <property type="term" value="P:phospholipid biosynthetic process"/>
    <property type="evidence" value="ECO:0000250"/>
    <property type="project" value="UniProtKB"/>
</dbReference>
<dbReference type="CDD" id="cd07991">
    <property type="entry name" value="LPLAT_LPCAT1-like"/>
    <property type="match status" value="1"/>
</dbReference>
<dbReference type="Gene3D" id="1.10.238.10">
    <property type="entry name" value="EF-hand"/>
    <property type="match status" value="1"/>
</dbReference>
<dbReference type="InterPro" id="IPR011992">
    <property type="entry name" value="EF-hand-dom_pair"/>
</dbReference>
<dbReference type="InterPro" id="IPR002048">
    <property type="entry name" value="EF_hand_dom"/>
</dbReference>
<dbReference type="InterPro" id="IPR045252">
    <property type="entry name" value="LPCAT1-like"/>
</dbReference>
<dbReference type="InterPro" id="IPR002123">
    <property type="entry name" value="Plipid/glycerol_acylTrfase"/>
</dbReference>
<dbReference type="PANTHER" id="PTHR23063:SF52">
    <property type="entry name" value="LYSOPHOSPHATIDYLCHOLINE ACYLTRANSFERASE"/>
    <property type="match status" value="1"/>
</dbReference>
<dbReference type="PANTHER" id="PTHR23063">
    <property type="entry name" value="PHOSPHOLIPID ACYLTRANSFERASE"/>
    <property type="match status" value="1"/>
</dbReference>
<dbReference type="Pfam" id="PF01553">
    <property type="entry name" value="Acyltransferase"/>
    <property type="match status" value="1"/>
</dbReference>
<dbReference type="Pfam" id="PF13833">
    <property type="entry name" value="EF-hand_8"/>
    <property type="match status" value="1"/>
</dbReference>
<dbReference type="SMART" id="SM00563">
    <property type="entry name" value="PlsC"/>
    <property type="match status" value="1"/>
</dbReference>
<dbReference type="SUPFAM" id="SSF47473">
    <property type="entry name" value="EF-hand"/>
    <property type="match status" value="1"/>
</dbReference>
<dbReference type="SUPFAM" id="SSF69593">
    <property type="entry name" value="Glycerol-3-phosphate (1)-acyltransferase"/>
    <property type="match status" value="1"/>
</dbReference>
<dbReference type="PROSITE" id="PS50222">
    <property type="entry name" value="EF_HAND_2"/>
    <property type="match status" value="3"/>
</dbReference>
<name>PCAT_DROME</name>
<feature type="chain" id="PRO_0000291477" description="Lysophosphatidylcholine acyltransferase">
    <location>
        <begin position="1"/>
        <end position="533"/>
    </location>
</feature>
<feature type="topological domain" description="Cytoplasmic" evidence="3">
    <location>
        <begin position="1"/>
        <end position="79"/>
    </location>
</feature>
<feature type="transmembrane region" description="Helical; Signal-anchor for type II membrane protein" evidence="3">
    <location>
        <begin position="80"/>
        <end position="100"/>
    </location>
</feature>
<feature type="topological domain" description="Lumenal" evidence="3">
    <location>
        <begin position="101"/>
        <end position="533"/>
    </location>
</feature>
<feature type="domain" description="EF-hand 1" evidence="4">
    <location>
        <begin position="402"/>
        <end position="437"/>
    </location>
</feature>
<feature type="domain" description="EF-hand 2" evidence="4">
    <location>
        <begin position="439"/>
        <end position="474"/>
    </location>
</feature>
<feature type="domain" description="EF-hand 3" evidence="4">
    <location>
        <begin position="475"/>
        <end position="510"/>
    </location>
</feature>
<feature type="short sequence motif" description="HXXXXD motif" evidence="1">
    <location>
        <begin position="158"/>
        <end position="163"/>
    </location>
</feature>
<feature type="sequence variant" description="In RNA edited version." evidence="6">
    <original>I</original>
    <variation>M</variation>
    <location>
        <position position="175"/>
    </location>
</feature>
<proteinExistence type="evidence at transcript level"/>
<gene>
    <name evidence="13" type="primary">LPCAT</name>
    <name evidence="13" type="ORF">CG32699</name>
</gene>
<organism>
    <name type="scientific">Drosophila melanogaster</name>
    <name type="common">Fruit fly</name>
    <dbReference type="NCBI Taxonomy" id="7227"/>
    <lineage>
        <taxon>Eukaryota</taxon>
        <taxon>Metazoa</taxon>
        <taxon>Ecdysozoa</taxon>
        <taxon>Arthropoda</taxon>
        <taxon>Hexapoda</taxon>
        <taxon>Insecta</taxon>
        <taxon>Pterygota</taxon>
        <taxon>Neoptera</taxon>
        <taxon>Endopterygota</taxon>
        <taxon>Diptera</taxon>
        <taxon>Brachycera</taxon>
        <taxon>Muscomorpha</taxon>
        <taxon>Ephydroidea</taxon>
        <taxon>Drosophilidae</taxon>
        <taxon>Drosophila</taxon>
        <taxon>Sophophora</taxon>
    </lineage>
</organism>
<accession>Q0KHU5</accession>
<accession>Q86NX4</accession>
<accession>Q95SE4</accession>
<accession>Q9W331</accession>
<evidence type="ECO:0000250" key="1">
    <source>
        <dbReference type="UniProtKB" id="Q3TFD2"/>
    </source>
</evidence>
<evidence type="ECO:0000250" key="2">
    <source>
        <dbReference type="UniProtKB" id="Q8NF37"/>
    </source>
</evidence>
<evidence type="ECO:0000255" key="3"/>
<evidence type="ECO:0000255" key="4">
    <source>
        <dbReference type="PROSITE-ProRule" id="PRU00448"/>
    </source>
</evidence>
<evidence type="ECO:0000269" key="5">
    <source>
    </source>
</evidence>
<evidence type="ECO:0000269" key="6">
    <source>
    </source>
</evidence>
<evidence type="ECO:0000269" key="7">
    <source>
    </source>
</evidence>
<evidence type="ECO:0000269" key="8">
    <source ref="3"/>
</evidence>
<evidence type="ECO:0000305" key="9"/>
<evidence type="ECO:0000312" key="10">
    <source>
        <dbReference type="EMBL" id="AAL28380.1"/>
    </source>
</evidence>
<evidence type="ECO:0000312" key="11">
    <source>
        <dbReference type="EMBL" id="AAO39597.1"/>
    </source>
</evidence>
<evidence type="ECO:0000312" key="12">
    <source>
        <dbReference type="EMBL" id="ABI30972.1"/>
    </source>
</evidence>
<evidence type="ECO:0000312" key="13">
    <source>
        <dbReference type="FlyBase" id="FBgn0052699"/>
    </source>
</evidence>
<keyword id="KW-0012">Acyltransferase</keyword>
<keyword id="KW-0106">Calcium</keyword>
<keyword id="KW-0256">Endoplasmic reticulum</keyword>
<keyword id="KW-0333">Golgi apparatus</keyword>
<keyword id="KW-0444">Lipid biosynthesis</keyword>
<keyword id="KW-0551">Lipid droplet</keyword>
<keyword id="KW-0443">Lipid metabolism</keyword>
<keyword id="KW-0472">Membrane</keyword>
<keyword id="KW-0594">Phospholipid biosynthesis</keyword>
<keyword id="KW-1208">Phospholipid metabolism</keyword>
<keyword id="KW-1185">Reference proteome</keyword>
<keyword id="KW-0677">Repeat</keyword>
<keyword id="KW-0691">RNA editing</keyword>
<keyword id="KW-0735">Signal-anchor</keyword>
<keyword id="KW-0808">Transferase</keyword>
<keyword id="KW-0812">Transmembrane</keyword>
<keyword id="KW-1133">Transmembrane helix</keyword>
<reference evidence="12" key="1">
    <citation type="journal article" date="2000" name="Science">
        <title>The genome sequence of Drosophila melanogaster.</title>
        <authorList>
            <person name="Adams M.D."/>
            <person name="Celniker S.E."/>
            <person name="Holt R.A."/>
            <person name="Evans C.A."/>
            <person name="Gocayne J.D."/>
            <person name="Amanatides P.G."/>
            <person name="Scherer S.E."/>
            <person name="Li P.W."/>
            <person name="Hoskins R.A."/>
            <person name="Galle R.F."/>
            <person name="George R.A."/>
            <person name="Lewis S.E."/>
            <person name="Richards S."/>
            <person name="Ashburner M."/>
            <person name="Henderson S.N."/>
            <person name="Sutton G.G."/>
            <person name="Wortman J.R."/>
            <person name="Yandell M.D."/>
            <person name="Zhang Q."/>
            <person name="Chen L.X."/>
            <person name="Brandon R.C."/>
            <person name="Rogers Y.-H.C."/>
            <person name="Blazej R.G."/>
            <person name="Champe M."/>
            <person name="Pfeiffer B.D."/>
            <person name="Wan K.H."/>
            <person name="Doyle C."/>
            <person name="Baxter E.G."/>
            <person name="Helt G."/>
            <person name="Nelson C.R."/>
            <person name="Miklos G.L.G."/>
            <person name="Abril J.F."/>
            <person name="Agbayani A."/>
            <person name="An H.-J."/>
            <person name="Andrews-Pfannkoch C."/>
            <person name="Baldwin D."/>
            <person name="Ballew R.M."/>
            <person name="Basu A."/>
            <person name="Baxendale J."/>
            <person name="Bayraktaroglu L."/>
            <person name="Beasley E.M."/>
            <person name="Beeson K.Y."/>
            <person name="Benos P.V."/>
            <person name="Berman B.P."/>
            <person name="Bhandari D."/>
            <person name="Bolshakov S."/>
            <person name="Borkova D."/>
            <person name="Botchan M.R."/>
            <person name="Bouck J."/>
            <person name="Brokstein P."/>
            <person name="Brottier P."/>
            <person name="Burtis K.C."/>
            <person name="Busam D.A."/>
            <person name="Butler H."/>
            <person name="Cadieu E."/>
            <person name="Center A."/>
            <person name="Chandra I."/>
            <person name="Cherry J.M."/>
            <person name="Cawley S."/>
            <person name="Dahlke C."/>
            <person name="Davenport L.B."/>
            <person name="Davies P."/>
            <person name="de Pablos B."/>
            <person name="Delcher A."/>
            <person name="Deng Z."/>
            <person name="Mays A.D."/>
            <person name="Dew I."/>
            <person name="Dietz S.M."/>
            <person name="Dodson K."/>
            <person name="Doup L.E."/>
            <person name="Downes M."/>
            <person name="Dugan-Rocha S."/>
            <person name="Dunkov B.C."/>
            <person name="Dunn P."/>
            <person name="Durbin K.J."/>
            <person name="Evangelista C.C."/>
            <person name="Ferraz C."/>
            <person name="Ferriera S."/>
            <person name="Fleischmann W."/>
            <person name="Fosler C."/>
            <person name="Gabrielian A.E."/>
            <person name="Garg N.S."/>
            <person name="Gelbart W.M."/>
            <person name="Glasser K."/>
            <person name="Glodek A."/>
            <person name="Gong F."/>
            <person name="Gorrell J.H."/>
            <person name="Gu Z."/>
            <person name="Guan P."/>
            <person name="Harris M."/>
            <person name="Harris N.L."/>
            <person name="Harvey D.A."/>
            <person name="Heiman T.J."/>
            <person name="Hernandez J.R."/>
            <person name="Houck J."/>
            <person name="Hostin D."/>
            <person name="Houston K.A."/>
            <person name="Howland T.J."/>
            <person name="Wei M.-H."/>
            <person name="Ibegwam C."/>
            <person name="Jalali M."/>
            <person name="Kalush F."/>
            <person name="Karpen G.H."/>
            <person name="Ke Z."/>
            <person name="Kennison J.A."/>
            <person name="Ketchum K.A."/>
            <person name="Kimmel B.E."/>
            <person name="Kodira C.D."/>
            <person name="Kraft C.L."/>
            <person name="Kravitz S."/>
            <person name="Kulp D."/>
            <person name="Lai Z."/>
            <person name="Lasko P."/>
            <person name="Lei Y."/>
            <person name="Levitsky A.A."/>
            <person name="Li J.H."/>
            <person name="Li Z."/>
            <person name="Liang Y."/>
            <person name="Lin X."/>
            <person name="Liu X."/>
            <person name="Mattei B."/>
            <person name="McIntosh T.C."/>
            <person name="McLeod M.P."/>
            <person name="McPherson D."/>
            <person name="Merkulov G."/>
            <person name="Milshina N.V."/>
            <person name="Mobarry C."/>
            <person name="Morris J."/>
            <person name="Moshrefi A."/>
            <person name="Mount S.M."/>
            <person name="Moy M."/>
            <person name="Murphy B."/>
            <person name="Murphy L."/>
            <person name="Muzny D.M."/>
            <person name="Nelson D.L."/>
            <person name="Nelson D.R."/>
            <person name="Nelson K.A."/>
            <person name="Nixon K."/>
            <person name="Nusskern D.R."/>
            <person name="Pacleb J.M."/>
            <person name="Palazzolo M."/>
            <person name="Pittman G.S."/>
            <person name="Pan S."/>
            <person name="Pollard J."/>
            <person name="Puri V."/>
            <person name="Reese M.G."/>
            <person name="Reinert K."/>
            <person name="Remington K."/>
            <person name="Saunders R.D.C."/>
            <person name="Scheeler F."/>
            <person name="Shen H."/>
            <person name="Shue B.C."/>
            <person name="Siden-Kiamos I."/>
            <person name="Simpson M."/>
            <person name="Skupski M.P."/>
            <person name="Smith T.J."/>
            <person name="Spier E."/>
            <person name="Spradling A.C."/>
            <person name="Stapleton M."/>
            <person name="Strong R."/>
            <person name="Sun E."/>
            <person name="Svirskas R."/>
            <person name="Tector C."/>
            <person name="Turner R."/>
            <person name="Venter E."/>
            <person name="Wang A.H."/>
            <person name="Wang X."/>
            <person name="Wang Z.-Y."/>
            <person name="Wassarman D.A."/>
            <person name="Weinstock G.M."/>
            <person name="Weissenbach J."/>
            <person name="Williams S.M."/>
            <person name="Woodage T."/>
            <person name="Worley K.C."/>
            <person name="Wu D."/>
            <person name="Yang S."/>
            <person name="Yao Q.A."/>
            <person name="Ye J."/>
            <person name="Yeh R.-F."/>
            <person name="Zaveri J.S."/>
            <person name="Zhan M."/>
            <person name="Zhang G."/>
            <person name="Zhao Q."/>
            <person name="Zheng L."/>
            <person name="Zheng X.H."/>
            <person name="Zhong F.N."/>
            <person name="Zhong W."/>
            <person name="Zhou X."/>
            <person name="Zhu S.C."/>
            <person name="Zhu X."/>
            <person name="Smith H.O."/>
            <person name="Gibbs R.A."/>
            <person name="Myers E.W."/>
            <person name="Rubin G.M."/>
            <person name="Venter J.C."/>
        </authorList>
    </citation>
    <scope>NUCLEOTIDE SEQUENCE [LARGE SCALE GENOMIC DNA]</scope>
    <source>
        <strain evidence="12">Berkeley</strain>
    </source>
</reference>
<reference evidence="9 12" key="2">
    <citation type="journal article" date="2002" name="Genome Biol.">
        <title>Annotation of the Drosophila melanogaster euchromatic genome: a systematic review.</title>
        <authorList>
            <person name="Misra S."/>
            <person name="Crosby M.A."/>
            <person name="Mungall C.J."/>
            <person name="Matthews B.B."/>
            <person name="Campbell K.S."/>
            <person name="Hradecky P."/>
            <person name="Huang Y."/>
            <person name="Kaminker J.S."/>
            <person name="Millburn G.H."/>
            <person name="Prochnik S.E."/>
            <person name="Smith C.D."/>
            <person name="Tupy J.L."/>
            <person name="Whitfield E.J."/>
            <person name="Bayraktaroglu L."/>
            <person name="Berman B.P."/>
            <person name="Bettencourt B.R."/>
            <person name="Celniker S.E."/>
            <person name="de Grey A.D.N.J."/>
            <person name="Drysdale R.A."/>
            <person name="Harris N.L."/>
            <person name="Richter J."/>
            <person name="Russo S."/>
            <person name="Schroeder A.J."/>
            <person name="Shu S.Q."/>
            <person name="Stapleton M."/>
            <person name="Yamada C."/>
            <person name="Ashburner M."/>
            <person name="Gelbart W.M."/>
            <person name="Rubin G.M."/>
            <person name="Lewis S.E."/>
        </authorList>
    </citation>
    <scope>GENOME REANNOTATION</scope>
    <source>
        <strain>Berkeley</strain>
    </source>
</reference>
<reference evidence="9 11" key="3">
    <citation type="submission" date="2003-02" db="EMBL/GenBank/DDBJ databases">
        <authorList>
            <person name="Stapleton M."/>
            <person name="Brokstein P."/>
            <person name="Hong L."/>
            <person name="Agbayani A."/>
            <person name="Carlson J.W."/>
            <person name="Champe M."/>
            <person name="Chavez C."/>
            <person name="Dorsett V."/>
            <person name="Dresnek D."/>
            <person name="Farfan D."/>
            <person name="Frise E."/>
            <person name="George R.A."/>
            <person name="Gonzalez M."/>
            <person name="Guarin H."/>
            <person name="Kronmiller B."/>
            <person name="Li P.W."/>
            <person name="Liao G."/>
            <person name="Miranda A."/>
            <person name="Mungall C.J."/>
            <person name="Nunoo J."/>
            <person name="Pacleb J.M."/>
            <person name="Paragas V."/>
            <person name="Park S."/>
            <person name="Patel S."/>
            <person name="Phouanenavong S."/>
            <person name="Wan K.H."/>
            <person name="Yu C."/>
            <person name="Lewis S.E."/>
            <person name="Rubin G.M."/>
            <person name="Celniker S.E."/>
        </authorList>
    </citation>
    <scope>NUCLEOTIDE SEQUENCE [LARGE SCALE MRNA]</scope>
    <scope>RNA EDITING OF POSITION 175</scope>
    <source>
        <strain evidence="11">Berkeley</strain>
        <tissue>Head</tissue>
    </source>
</reference>
<reference evidence="9 10" key="4">
    <citation type="journal article" date="2002" name="Genome Biol.">
        <title>A Drosophila full-length cDNA resource.</title>
        <authorList>
            <person name="Stapleton M."/>
            <person name="Carlson J.W."/>
            <person name="Brokstein P."/>
            <person name="Yu C."/>
            <person name="Champe M."/>
            <person name="George R.A."/>
            <person name="Guarin H."/>
            <person name="Kronmiller B."/>
            <person name="Pacleb J.M."/>
            <person name="Park S."/>
            <person name="Wan K.H."/>
            <person name="Rubin G.M."/>
            <person name="Celniker S.E."/>
        </authorList>
    </citation>
    <scope>NUCLEOTIDE SEQUENCE [LARGE SCALE MRNA] OF 136-450</scope>
    <source>
        <strain evidence="10">Berkeley</strain>
        <tissue evidence="5">Ovary</tissue>
    </source>
</reference>
<reference evidence="9" key="5">
    <citation type="journal article" date="2006" name="RNA">
        <title>RNA editing in Drosophila melanogaster: new targets and functional consequences.</title>
        <authorList>
            <person name="Stapleton M."/>
            <person name="Carlson J.W."/>
            <person name="Celniker S.E."/>
        </authorList>
    </citation>
    <scope>RNA EDITING OF POSITION 175</scope>
</reference>
<reference key="6">
    <citation type="journal article" date="2014" name="BMC Cell Biol.">
        <title>Two different pathways of phosphatidylcholine synthesis, the Kennedy Pathway and the Lands Cycle, differentially regulate cellular triacylglycerol storage.</title>
        <authorList>
            <person name="Moessinger C."/>
            <person name="Klizaite K."/>
            <person name="Steinhagen A."/>
            <person name="Philippou-Massier J."/>
            <person name="Shevchenko A."/>
            <person name="Hoch M."/>
            <person name="Ejsing C.S."/>
            <person name="Thiele C."/>
        </authorList>
    </citation>
    <scope>FUNCTION</scope>
    <scope>SUBCELLULAR LOCATION</scope>
    <scope>DISRUPTION PHENOTYPE</scope>
</reference>